<protein>
    <recommendedName>
        <fullName evidence="1">Na(+)-translocating NADH-quinone reductase subunit D</fullName>
        <shortName evidence="1">Na(+)-NQR subunit D</shortName>
        <shortName evidence="1">Na(+)-translocating NQR subunit D</shortName>
        <ecNumber evidence="1 2">7.2.1.1</ecNumber>
    </recommendedName>
    <alternativeName>
        <fullName evidence="1">NQR complex subunit D</fullName>
    </alternativeName>
    <alternativeName>
        <fullName evidence="1">NQR-1 subunit D</fullName>
    </alternativeName>
</protein>
<gene>
    <name evidence="1 4" type="primary">nqrD</name>
    <name type="ordered locus">VC0395_A1881</name>
    <name type="ordered locus">VC395_2408</name>
</gene>
<evidence type="ECO:0000255" key="1">
    <source>
        <dbReference type="HAMAP-Rule" id="MF_00428"/>
    </source>
</evidence>
<evidence type="ECO:0000269" key="2">
    <source>
    </source>
</evidence>
<evidence type="ECO:0000269" key="3">
    <source>
    </source>
</evidence>
<evidence type="ECO:0000303" key="4">
    <source>
    </source>
</evidence>
<evidence type="ECO:0000305" key="5"/>
<evidence type="ECO:0007829" key="6">
    <source>
        <dbReference type="PDB" id="7XK7"/>
    </source>
</evidence>
<evidence type="ECO:0007829" key="7">
    <source>
        <dbReference type="PDB" id="8A1W"/>
    </source>
</evidence>
<evidence type="ECO:0007829" key="8">
    <source>
        <dbReference type="PDB" id="8EW3"/>
    </source>
</evidence>
<reference key="1">
    <citation type="submission" date="2007-03" db="EMBL/GenBank/DDBJ databases">
        <authorList>
            <person name="Heidelberg J."/>
        </authorList>
    </citation>
    <scope>NUCLEOTIDE SEQUENCE [LARGE SCALE GENOMIC DNA]</scope>
    <source>
        <strain>ATCC 39541 / Classical Ogawa 395 / O395</strain>
    </source>
</reference>
<reference key="2">
    <citation type="journal article" date="2008" name="PLoS ONE">
        <title>A recalibrated molecular clock and independent origins for the cholera pandemic clones.</title>
        <authorList>
            <person name="Feng L."/>
            <person name="Reeves P.R."/>
            <person name="Lan R."/>
            <person name="Ren Y."/>
            <person name="Gao C."/>
            <person name="Zhou Z."/>
            <person name="Ren Y."/>
            <person name="Cheng J."/>
            <person name="Wang W."/>
            <person name="Wang J."/>
            <person name="Qian W."/>
            <person name="Li D."/>
            <person name="Wang L."/>
        </authorList>
    </citation>
    <scope>NUCLEOTIDE SEQUENCE [LARGE SCALE GENOMIC DNA]</scope>
    <source>
        <strain>ATCC 39541 / Classical Ogawa 395 / O395</strain>
    </source>
</reference>
<reference key="3">
    <citation type="journal article" date="2002" name="Biochemistry">
        <title>Purification and characterization of the recombinant Na(+)-translocating NADH:quinone oxidoreductase from Vibrio cholerae.</title>
        <authorList>
            <person name="Barquera B."/>
            <person name="Hellwig P."/>
            <person name="Zhou W."/>
            <person name="Morgan J.E."/>
            <person name="Haese C.C."/>
            <person name="Gosink K.K."/>
            <person name="Nilges M."/>
            <person name="Bruesehoff P.J."/>
            <person name="Roth A."/>
            <person name="Lancaster C.R."/>
            <person name="Gennis R.B."/>
        </authorList>
    </citation>
    <scope>CATALYTIC ACTIVITY</scope>
    <scope>SUBUNIT</scope>
    <source>
        <strain>ATCC 39541 / Classical Ogawa 395 / O395</strain>
    </source>
</reference>
<reference key="4">
    <citation type="journal article" date="2010" name="J. Biol. Chem.">
        <title>Localization and function of the membrane-bound riboflavin in the Na+-translocating NADH:quinone oxidoreductase (Na+-NQR) from Vibrio cholerae.</title>
        <authorList>
            <person name="Casutt M.S."/>
            <person name="Huber T."/>
            <person name="Brunisholz R."/>
            <person name="Tao M."/>
            <person name="Fritz G."/>
            <person name="Steuber J."/>
        </authorList>
    </citation>
    <scope>SUBUNIT</scope>
    <source>
        <strain>ATCC 39541 / Classical Ogawa 395 / O395</strain>
    </source>
</reference>
<proteinExistence type="evidence at protein level"/>
<sequence>MSSAKELKKSVLAPVLDNNPIALQVLGVCSALAVTTKLETAFVMTLAVMFVTALSNFFVSLIRNHIPNSVRIIVQMAIIASLVIVVDQILKAYLYDISKQLSVFVGLIITNCIVMGRAEAFAMKSEPIPSFIDGIGNGLGYGFVLMTVGFFRELLGSGKLFGLEVLPLISNGGWYQPNGLMLLAPSAFFLIGFMIWAIRTFKPEQVEAKE</sequence>
<keyword id="KW-0002">3D-structure</keyword>
<keyword id="KW-0997">Cell inner membrane</keyword>
<keyword id="KW-1003">Cell membrane</keyword>
<keyword id="KW-0406">Ion transport</keyword>
<keyword id="KW-0472">Membrane</keyword>
<keyword id="KW-0520">NAD</keyword>
<keyword id="KW-0915">Sodium</keyword>
<keyword id="KW-0739">Sodium transport</keyword>
<keyword id="KW-1278">Translocase</keyword>
<keyword id="KW-0812">Transmembrane</keyword>
<keyword id="KW-1133">Transmembrane helix</keyword>
<keyword id="KW-0813">Transport</keyword>
<keyword id="KW-0830">Ubiquinone</keyword>
<organism>
    <name type="scientific">Vibrio cholerae serotype O1 (strain ATCC 39541 / Classical Ogawa 395 / O395)</name>
    <dbReference type="NCBI Taxonomy" id="345073"/>
    <lineage>
        <taxon>Bacteria</taxon>
        <taxon>Pseudomonadati</taxon>
        <taxon>Pseudomonadota</taxon>
        <taxon>Gammaproteobacteria</taxon>
        <taxon>Vibrionales</taxon>
        <taxon>Vibrionaceae</taxon>
        <taxon>Vibrio</taxon>
    </lineage>
</organism>
<comment type="function">
    <text evidence="1">NQR complex catalyzes the reduction of ubiquinone-1 to ubiquinol by two successive reactions, coupled with the transport of Na(+) ions from the cytoplasm to the periplasm. NqrA to NqrE are probably involved in the second step, the conversion of ubisemiquinone to ubiquinol.</text>
</comment>
<comment type="catalytic activity">
    <reaction evidence="1 2">
        <text>a ubiquinone + n Na(+)(in) + NADH + H(+) = a ubiquinol + n Na(+)(out) + NAD(+)</text>
        <dbReference type="Rhea" id="RHEA:47748"/>
        <dbReference type="Rhea" id="RHEA-COMP:9565"/>
        <dbReference type="Rhea" id="RHEA-COMP:9566"/>
        <dbReference type="ChEBI" id="CHEBI:15378"/>
        <dbReference type="ChEBI" id="CHEBI:16389"/>
        <dbReference type="ChEBI" id="CHEBI:17976"/>
        <dbReference type="ChEBI" id="CHEBI:29101"/>
        <dbReference type="ChEBI" id="CHEBI:57540"/>
        <dbReference type="ChEBI" id="CHEBI:57945"/>
        <dbReference type="EC" id="7.2.1.1"/>
    </reaction>
</comment>
<comment type="subunit">
    <text evidence="1 2 3">Composed of six subunits; NqrA, NqrB, NqrC, NqrD, NqrE and NqrF.</text>
</comment>
<comment type="subcellular location">
    <subcellularLocation>
        <location evidence="1 5">Cell inner membrane</location>
        <topology evidence="1">Multi-pass membrane protein</topology>
    </subcellularLocation>
</comment>
<comment type="similarity">
    <text evidence="1 5">Belongs to the NqrDE/RnfAE family.</text>
</comment>
<feature type="chain" id="PRO_1000072308" description="Na(+)-translocating NADH-quinone reductase subunit D">
    <location>
        <begin position="1"/>
        <end position="210"/>
    </location>
</feature>
<feature type="transmembrane region" description="Helical" evidence="1">
    <location>
        <begin position="42"/>
        <end position="62"/>
    </location>
</feature>
<feature type="transmembrane region" description="Helical" evidence="1">
    <location>
        <begin position="72"/>
        <end position="92"/>
    </location>
</feature>
<feature type="transmembrane region" description="Helical" evidence="1">
    <location>
        <begin position="103"/>
        <end position="123"/>
    </location>
</feature>
<feature type="transmembrane region" description="Helical" evidence="1">
    <location>
        <begin position="131"/>
        <end position="151"/>
    </location>
</feature>
<feature type="transmembrane region" description="Helical" evidence="1">
    <location>
        <begin position="178"/>
        <end position="198"/>
    </location>
</feature>
<feature type="helix" evidence="7">
    <location>
        <begin position="9"/>
        <end position="16"/>
    </location>
</feature>
<feature type="turn" evidence="7">
    <location>
        <begin position="20"/>
        <end position="23"/>
    </location>
</feature>
<feature type="helix" evidence="7">
    <location>
        <begin position="28"/>
        <end position="31"/>
    </location>
</feature>
<feature type="helix" evidence="8">
    <location>
        <begin position="34"/>
        <end position="36"/>
    </location>
</feature>
<feature type="helix" evidence="7">
    <location>
        <begin position="38"/>
        <end position="61"/>
    </location>
</feature>
<feature type="turn" evidence="7">
    <location>
        <begin position="62"/>
        <end position="65"/>
    </location>
</feature>
<feature type="helix" evidence="7">
    <location>
        <begin position="68"/>
        <end position="70"/>
    </location>
</feature>
<feature type="helix" evidence="7">
    <location>
        <begin position="71"/>
        <end position="92"/>
    </location>
</feature>
<feature type="helix" evidence="7">
    <location>
        <begin position="95"/>
        <end position="101"/>
    </location>
</feature>
<feature type="helix" evidence="7">
    <location>
        <begin position="102"/>
        <end position="104"/>
    </location>
</feature>
<feature type="helix" evidence="7">
    <location>
        <begin position="106"/>
        <end position="108"/>
    </location>
</feature>
<feature type="helix" evidence="7">
    <location>
        <begin position="112"/>
        <end position="120"/>
    </location>
</feature>
<feature type="helix" evidence="7">
    <location>
        <begin position="122"/>
        <end position="124"/>
    </location>
</feature>
<feature type="helix" evidence="7">
    <location>
        <begin position="127"/>
        <end position="157"/>
    </location>
</feature>
<feature type="strand" evidence="7">
    <location>
        <begin position="158"/>
        <end position="160"/>
    </location>
</feature>
<feature type="strand" evidence="7">
    <location>
        <begin position="163"/>
        <end position="166"/>
    </location>
</feature>
<feature type="helix" evidence="7">
    <location>
        <begin position="169"/>
        <end position="171"/>
    </location>
</feature>
<feature type="strand" evidence="6">
    <location>
        <begin position="173"/>
        <end position="175"/>
    </location>
</feature>
<feature type="helix" evidence="7">
    <location>
        <begin position="179"/>
        <end position="182"/>
    </location>
</feature>
<feature type="helix" evidence="7">
    <location>
        <begin position="184"/>
        <end position="201"/>
    </location>
</feature>
<feature type="helix" evidence="7">
    <location>
        <begin position="203"/>
        <end position="205"/>
    </location>
</feature>
<dbReference type="EC" id="7.2.1.1" evidence="1 2"/>
<dbReference type="EMBL" id="CP000627">
    <property type="protein sequence ID" value="ABQ20327.1"/>
    <property type="molecule type" value="Genomic_DNA"/>
</dbReference>
<dbReference type="EMBL" id="CP001235">
    <property type="protein sequence ID" value="ACP10398.1"/>
    <property type="molecule type" value="Genomic_DNA"/>
</dbReference>
<dbReference type="RefSeq" id="WP_000092895.1">
    <property type="nucleotide sequence ID" value="NZ_JAACZH010000008.1"/>
</dbReference>
<dbReference type="PDB" id="7XK3">
    <property type="method" value="EM"/>
    <property type="resolution" value="3.10 A"/>
    <property type="chains" value="D=1-210"/>
</dbReference>
<dbReference type="PDB" id="7XK4">
    <property type="method" value="EM"/>
    <property type="resolution" value="3.10 A"/>
    <property type="chains" value="D=1-210"/>
</dbReference>
<dbReference type="PDB" id="7XK5">
    <property type="method" value="EM"/>
    <property type="resolution" value="3.10 A"/>
    <property type="chains" value="D=1-210"/>
</dbReference>
<dbReference type="PDB" id="7XK6">
    <property type="method" value="EM"/>
    <property type="resolution" value="3.00 A"/>
    <property type="chains" value="D=1-210"/>
</dbReference>
<dbReference type="PDB" id="7XK7">
    <property type="method" value="EM"/>
    <property type="resolution" value="2.90 A"/>
    <property type="chains" value="D=1-210"/>
</dbReference>
<dbReference type="PDB" id="8A1T">
    <property type="method" value="EM"/>
    <property type="resolution" value="3.37 A"/>
    <property type="chains" value="D=1-210"/>
</dbReference>
<dbReference type="PDB" id="8A1V">
    <property type="method" value="EM"/>
    <property type="resolution" value="2.73 A"/>
    <property type="chains" value="D=1-210"/>
</dbReference>
<dbReference type="PDB" id="8A1W">
    <property type="method" value="EM"/>
    <property type="resolution" value="2.56 A"/>
    <property type="chains" value="D=1-210"/>
</dbReference>
<dbReference type="PDB" id="8A1X">
    <property type="method" value="EM"/>
    <property type="resolution" value="3.20 A"/>
    <property type="chains" value="D=1-210"/>
</dbReference>
<dbReference type="PDB" id="8A1Y">
    <property type="method" value="EM"/>
    <property type="resolution" value="3.30 A"/>
    <property type="chains" value="D=1-210"/>
</dbReference>
<dbReference type="PDB" id="8ACW">
    <property type="method" value="X-ray"/>
    <property type="resolution" value="3.40 A"/>
    <property type="chains" value="D=1-210"/>
</dbReference>
<dbReference type="PDB" id="8AD0">
    <property type="method" value="X-ray"/>
    <property type="resolution" value="3.11 A"/>
    <property type="chains" value="D=1-210"/>
</dbReference>
<dbReference type="PDB" id="8EW3">
    <property type="method" value="EM"/>
    <property type="resolution" value="2.65 A"/>
    <property type="chains" value="D=1-210"/>
</dbReference>
<dbReference type="PDBsum" id="7XK3"/>
<dbReference type="PDBsum" id="7XK4"/>
<dbReference type="PDBsum" id="7XK5"/>
<dbReference type="PDBsum" id="7XK6"/>
<dbReference type="PDBsum" id="7XK7"/>
<dbReference type="PDBsum" id="8A1T"/>
<dbReference type="PDBsum" id="8A1V"/>
<dbReference type="PDBsum" id="8A1W"/>
<dbReference type="PDBsum" id="8A1X"/>
<dbReference type="PDBsum" id="8A1Y"/>
<dbReference type="PDBsum" id="8ACW"/>
<dbReference type="PDBsum" id="8AD0"/>
<dbReference type="PDBsum" id="8EW3"/>
<dbReference type="EMDB" id="EMD-28641"/>
<dbReference type="EMDB" id="EMD-33242"/>
<dbReference type="EMDB" id="EMD-33243"/>
<dbReference type="EMDB" id="EMD-33244"/>
<dbReference type="EMDB" id="EMD-33245"/>
<dbReference type="EMDB" id="EMD-33246"/>
<dbReference type="SMR" id="A5F5Y6"/>
<dbReference type="KEGG" id="vco:VC0395_A1881"/>
<dbReference type="KEGG" id="vcr:VC395_2408"/>
<dbReference type="PATRIC" id="fig|345073.21.peg.2321"/>
<dbReference type="eggNOG" id="COG1347">
    <property type="taxonomic scope" value="Bacteria"/>
</dbReference>
<dbReference type="HOGENOM" id="CLU_046659_1_1_6"/>
<dbReference type="OrthoDB" id="9782945at2"/>
<dbReference type="BRENDA" id="7.2.1.1">
    <property type="organism ID" value="15862"/>
</dbReference>
<dbReference type="Proteomes" id="UP000000249">
    <property type="component" value="Chromosome 2"/>
</dbReference>
<dbReference type="GO" id="GO:0005886">
    <property type="term" value="C:plasma membrane"/>
    <property type="evidence" value="ECO:0007669"/>
    <property type="project" value="UniProtKB-SubCell"/>
</dbReference>
<dbReference type="GO" id="GO:0016655">
    <property type="term" value="F:oxidoreductase activity, acting on NAD(P)H, quinone or similar compound as acceptor"/>
    <property type="evidence" value="ECO:0000314"/>
    <property type="project" value="UniProtKB"/>
</dbReference>
<dbReference type="GO" id="GO:0006814">
    <property type="term" value="P:sodium ion transport"/>
    <property type="evidence" value="ECO:0000314"/>
    <property type="project" value="UniProtKB"/>
</dbReference>
<dbReference type="HAMAP" id="MF_00428">
    <property type="entry name" value="NqrD"/>
    <property type="match status" value="1"/>
</dbReference>
<dbReference type="InterPro" id="IPR011292">
    <property type="entry name" value="NqrD"/>
</dbReference>
<dbReference type="InterPro" id="IPR003667">
    <property type="entry name" value="NqrDE/RnfAE"/>
</dbReference>
<dbReference type="NCBIfam" id="TIGR01939">
    <property type="entry name" value="nqrD"/>
    <property type="match status" value="1"/>
</dbReference>
<dbReference type="NCBIfam" id="NF006777">
    <property type="entry name" value="PRK09292.1"/>
    <property type="match status" value="1"/>
</dbReference>
<dbReference type="NCBIfam" id="NF009070">
    <property type="entry name" value="PRK12405.1"/>
    <property type="match status" value="1"/>
</dbReference>
<dbReference type="PANTHER" id="PTHR30586">
    <property type="entry name" value="ELECTRON TRANSPORT COMPLEX PROTEIN RNFE"/>
    <property type="match status" value="1"/>
</dbReference>
<dbReference type="PANTHER" id="PTHR30586:SF1">
    <property type="entry name" value="NA(+)-TRANSLOCATING NADH-QUINONE REDUCTASE SUBUNIT D"/>
    <property type="match status" value="1"/>
</dbReference>
<dbReference type="Pfam" id="PF02508">
    <property type="entry name" value="Rnf-Nqr"/>
    <property type="match status" value="1"/>
</dbReference>
<dbReference type="PIRSF" id="PIRSF006102">
    <property type="entry name" value="NQR_DE"/>
    <property type="match status" value="1"/>
</dbReference>
<accession>A5F5Y6</accession>
<accession>C3M416</accession>
<name>NQRD_VIBC3</name>